<protein>
    <recommendedName>
        <fullName evidence="1">DNA-directed RNA polymerase subunit alpha</fullName>
        <shortName evidence="1">RNAP subunit alpha</shortName>
        <ecNumber evidence="1">2.7.7.6</ecNumber>
    </recommendedName>
    <alternativeName>
        <fullName evidence="1">RNA polymerase subunit alpha</fullName>
    </alternativeName>
    <alternativeName>
        <fullName evidence="1">Transcriptase subunit alpha</fullName>
    </alternativeName>
</protein>
<dbReference type="EC" id="2.7.7.6" evidence="1"/>
<dbReference type="EMBL" id="CP001056">
    <property type="protein sequence ID" value="ACD23340.1"/>
    <property type="molecule type" value="Genomic_DNA"/>
</dbReference>
<dbReference type="SMR" id="B2TIK4"/>
<dbReference type="KEGG" id="cbk:CLL_A0267"/>
<dbReference type="PATRIC" id="fig|935198.13.peg.242"/>
<dbReference type="HOGENOM" id="CLU_053084_0_1_9"/>
<dbReference type="Proteomes" id="UP000001195">
    <property type="component" value="Chromosome"/>
</dbReference>
<dbReference type="GO" id="GO:0005737">
    <property type="term" value="C:cytoplasm"/>
    <property type="evidence" value="ECO:0007669"/>
    <property type="project" value="UniProtKB-ARBA"/>
</dbReference>
<dbReference type="GO" id="GO:0000428">
    <property type="term" value="C:DNA-directed RNA polymerase complex"/>
    <property type="evidence" value="ECO:0007669"/>
    <property type="project" value="UniProtKB-KW"/>
</dbReference>
<dbReference type="GO" id="GO:0003677">
    <property type="term" value="F:DNA binding"/>
    <property type="evidence" value="ECO:0007669"/>
    <property type="project" value="UniProtKB-UniRule"/>
</dbReference>
<dbReference type="GO" id="GO:0003899">
    <property type="term" value="F:DNA-directed RNA polymerase activity"/>
    <property type="evidence" value="ECO:0007669"/>
    <property type="project" value="UniProtKB-UniRule"/>
</dbReference>
<dbReference type="GO" id="GO:0046983">
    <property type="term" value="F:protein dimerization activity"/>
    <property type="evidence" value="ECO:0007669"/>
    <property type="project" value="InterPro"/>
</dbReference>
<dbReference type="GO" id="GO:0006351">
    <property type="term" value="P:DNA-templated transcription"/>
    <property type="evidence" value="ECO:0007669"/>
    <property type="project" value="UniProtKB-UniRule"/>
</dbReference>
<dbReference type="CDD" id="cd06928">
    <property type="entry name" value="RNAP_alpha_NTD"/>
    <property type="match status" value="1"/>
</dbReference>
<dbReference type="FunFam" id="1.10.150.20:FF:000001">
    <property type="entry name" value="DNA-directed RNA polymerase subunit alpha"/>
    <property type="match status" value="1"/>
</dbReference>
<dbReference type="FunFam" id="2.170.120.12:FF:000001">
    <property type="entry name" value="DNA-directed RNA polymerase subunit alpha"/>
    <property type="match status" value="1"/>
</dbReference>
<dbReference type="Gene3D" id="1.10.150.20">
    <property type="entry name" value="5' to 3' exonuclease, C-terminal subdomain"/>
    <property type="match status" value="1"/>
</dbReference>
<dbReference type="Gene3D" id="2.170.120.12">
    <property type="entry name" value="DNA-directed RNA polymerase, insert domain"/>
    <property type="match status" value="1"/>
</dbReference>
<dbReference type="Gene3D" id="3.30.1360.10">
    <property type="entry name" value="RNA polymerase, RBP11-like subunit"/>
    <property type="match status" value="1"/>
</dbReference>
<dbReference type="HAMAP" id="MF_00059">
    <property type="entry name" value="RNApol_bact_RpoA"/>
    <property type="match status" value="1"/>
</dbReference>
<dbReference type="InterPro" id="IPR011262">
    <property type="entry name" value="DNA-dir_RNA_pol_insert"/>
</dbReference>
<dbReference type="InterPro" id="IPR011263">
    <property type="entry name" value="DNA-dir_RNA_pol_RpoA/D/Rpb3"/>
</dbReference>
<dbReference type="InterPro" id="IPR011773">
    <property type="entry name" value="DNA-dir_RpoA"/>
</dbReference>
<dbReference type="InterPro" id="IPR036603">
    <property type="entry name" value="RBP11-like"/>
</dbReference>
<dbReference type="InterPro" id="IPR011260">
    <property type="entry name" value="RNAP_asu_C"/>
</dbReference>
<dbReference type="InterPro" id="IPR036643">
    <property type="entry name" value="RNApol_insert_sf"/>
</dbReference>
<dbReference type="NCBIfam" id="NF003513">
    <property type="entry name" value="PRK05182.1-2"/>
    <property type="match status" value="1"/>
</dbReference>
<dbReference type="NCBIfam" id="NF003515">
    <property type="entry name" value="PRK05182.2-1"/>
    <property type="match status" value="1"/>
</dbReference>
<dbReference type="NCBIfam" id="NF003519">
    <property type="entry name" value="PRK05182.2-5"/>
    <property type="match status" value="1"/>
</dbReference>
<dbReference type="NCBIfam" id="TIGR02027">
    <property type="entry name" value="rpoA"/>
    <property type="match status" value="1"/>
</dbReference>
<dbReference type="Pfam" id="PF01000">
    <property type="entry name" value="RNA_pol_A_bac"/>
    <property type="match status" value="1"/>
</dbReference>
<dbReference type="Pfam" id="PF03118">
    <property type="entry name" value="RNA_pol_A_CTD"/>
    <property type="match status" value="1"/>
</dbReference>
<dbReference type="Pfam" id="PF01193">
    <property type="entry name" value="RNA_pol_L"/>
    <property type="match status" value="1"/>
</dbReference>
<dbReference type="SMART" id="SM00662">
    <property type="entry name" value="RPOLD"/>
    <property type="match status" value="1"/>
</dbReference>
<dbReference type="SUPFAM" id="SSF47789">
    <property type="entry name" value="C-terminal domain of RNA polymerase alpha subunit"/>
    <property type="match status" value="1"/>
</dbReference>
<dbReference type="SUPFAM" id="SSF56553">
    <property type="entry name" value="Insert subdomain of RNA polymerase alpha subunit"/>
    <property type="match status" value="1"/>
</dbReference>
<dbReference type="SUPFAM" id="SSF55257">
    <property type="entry name" value="RBP11-like subunits of RNA polymerase"/>
    <property type="match status" value="1"/>
</dbReference>
<evidence type="ECO:0000255" key="1">
    <source>
        <dbReference type="HAMAP-Rule" id="MF_00059"/>
    </source>
</evidence>
<keyword id="KW-0240">DNA-directed RNA polymerase</keyword>
<keyword id="KW-0548">Nucleotidyltransferase</keyword>
<keyword id="KW-0804">Transcription</keyword>
<keyword id="KW-0808">Transferase</keyword>
<gene>
    <name evidence="1" type="primary">rpoA</name>
    <name type="ordered locus">CLL_A0267</name>
</gene>
<sequence>MLEIEKPIIECIEASEDGTYGKYVVEPLERGYGITLGNALRRILLSSLPGVATSSVKIDGVLHEFSTVQGVKEDVTELILNIKSLALRMNGEGPKVIYIDAKGPGEVTGADIKTDGDVEVVNKDLHIATLDDNGRLYMELTVNRGRGYVTQNKNKSDELPISSIAIDSIYTPVKKVNFTVDNTRVGQITDYDKLTLEIWTNGTIKIDEAISLSAKILIEHFKLFMSLTNNTNDVEIMIEKEEDKKEKVLEMTVEELDLSVRSYNCLKRAGINTVQELATKSMDDMMKVRNLGKKSLEEVERKLKELGLCLKLNDE</sequence>
<name>RPOA_CLOBB</name>
<organism>
    <name type="scientific">Clostridium botulinum (strain Eklund 17B / Type B)</name>
    <dbReference type="NCBI Taxonomy" id="935198"/>
    <lineage>
        <taxon>Bacteria</taxon>
        <taxon>Bacillati</taxon>
        <taxon>Bacillota</taxon>
        <taxon>Clostridia</taxon>
        <taxon>Eubacteriales</taxon>
        <taxon>Clostridiaceae</taxon>
        <taxon>Clostridium</taxon>
    </lineage>
</organism>
<proteinExistence type="inferred from homology"/>
<accession>B2TIK4</accession>
<reference key="1">
    <citation type="submission" date="2008-04" db="EMBL/GenBank/DDBJ databases">
        <title>Complete sequence of Clostridium botulinum strain Eklund.</title>
        <authorList>
            <person name="Brinkac L.M."/>
            <person name="Brown J.L."/>
            <person name="Bruce D."/>
            <person name="Detter C."/>
            <person name="Munk C."/>
            <person name="Smith L.A."/>
            <person name="Smith T.J."/>
            <person name="Sutton G."/>
            <person name="Brettin T.S."/>
        </authorList>
    </citation>
    <scope>NUCLEOTIDE SEQUENCE [LARGE SCALE GENOMIC DNA]</scope>
    <source>
        <strain>Eklund 17B / Type B</strain>
    </source>
</reference>
<feature type="chain" id="PRO_1000091939" description="DNA-directed RNA polymerase subunit alpha">
    <location>
        <begin position="1"/>
        <end position="315"/>
    </location>
</feature>
<feature type="region of interest" description="Alpha N-terminal domain (alpha-NTD)" evidence="1">
    <location>
        <begin position="1"/>
        <end position="228"/>
    </location>
</feature>
<feature type="region of interest" description="Alpha C-terminal domain (alpha-CTD)" evidence="1">
    <location>
        <begin position="245"/>
        <end position="315"/>
    </location>
</feature>
<comment type="function">
    <text evidence="1">DNA-dependent RNA polymerase catalyzes the transcription of DNA into RNA using the four ribonucleoside triphosphates as substrates.</text>
</comment>
<comment type="catalytic activity">
    <reaction evidence="1">
        <text>RNA(n) + a ribonucleoside 5'-triphosphate = RNA(n+1) + diphosphate</text>
        <dbReference type="Rhea" id="RHEA:21248"/>
        <dbReference type="Rhea" id="RHEA-COMP:14527"/>
        <dbReference type="Rhea" id="RHEA-COMP:17342"/>
        <dbReference type="ChEBI" id="CHEBI:33019"/>
        <dbReference type="ChEBI" id="CHEBI:61557"/>
        <dbReference type="ChEBI" id="CHEBI:140395"/>
        <dbReference type="EC" id="2.7.7.6"/>
    </reaction>
</comment>
<comment type="subunit">
    <text evidence="1">Homodimer. The RNAP catalytic core consists of 2 alpha, 1 beta, 1 beta' and 1 omega subunit. When a sigma factor is associated with the core the holoenzyme is formed, which can initiate transcription.</text>
</comment>
<comment type="domain">
    <text evidence="1">The N-terminal domain is essential for RNAP assembly and basal transcription, whereas the C-terminal domain is involved in interaction with transcriptional regulators and with upstream promoter elements.</text>
</comment>
<comment type="similarity">
    <text evidence="1">Belongs to the RNA polymerase alpha chain family.</text>
</comment>